<protein>
    <recommendedName>
        <fullName>Zinc finger protein ZXDC</fullName>
    </recommendedName>
</protein>
<evidence type="ECO:0000250" key="1"/>
<evidence type="ECO:0000255" key="2">
    <source>
        <dbReference type="PROSITE-ProRule" id="PRU00042"/>
    </source>
</evidence>
<evidence type="ECO:0000256" key="3">
    <source>
        <dbReference type="SAM" id="MobiDB-lite"/>
    </source>
</evidence>
<evidence type="ECO:0000303" key="4">
    <source>
    </source>
</evidence>
<evidence type="ECO:0000303" key="5">
    <source>
    </source>
</evidence>
<evidence type="ECO:0000305" key="6"/>
<reference key="1">
    <citation type="journal article" date="2005" name="Science">
        <title>The transcriptional landscape of the mammalian genome.</title>
        <authorList>
            <person name="Carninci P."/>
            <person name="Kasukawa T."/>
            <person name="Katayama S."/>
            <person name="Gough J."/>
            <person name="Frith M.C."/>
            <person name="Maeda N."/>
            <person name="Oyama R."/>
            <person name="Ravasi T."/>
            <person name="Lenhard B."/>
            <person name="Wells C."/>
            <person name="Kodzius R."/>
            <person name="Shimokawa K."/>
            <person name="Bajic V.B."/>
            <person name="Brenner S.E."/>
            <person name="Batalov S."/>
            <person name="Forrest A.R."/>
            <person name="Zavolan M."/>
            <person name="Davis M.J."/>
            <person name="Wilming L.G."/>
            <person name="Aidinis V."/>
            <person name="Allen J.E."/>
            <person name="Ambesi-Impiombato A."/>
            <person name="Apweiler R."/>
            <person name="Aturaliya R.N."/>
            <person name="Bailey T.L."/>
            <person name="Bansal M."/>
            <person name="Baxter L."/>
            <person name="Beisel K.W."/>
            <person name="Bersano T."/>
            <person name="Bono H."/>
            <person name="Chalk A.M."/>
            <person name="Chiu K.P."/>
            <person name="Choudhary V."/>
            <person name="Christoffels A."/>
            <person name="Clutterbuck D.R."/>
            <person name="Crowe M.L."/>
            <person name="Dalla E."/>
            <person name="Dalrymple B.P."/>
            <person name="de Bono B."/>
            <person name="Della Gatta G."/>
            <person name="di Bernardo D."/>
            <person name="Down T."/>
            <person name="Engstrom P."/>
            <person name="Fagiolini M."/>
            <person name="Faulkner G."/>
            <person name="Fletcher C.F."/>
            <person name="Fukushima T."/>
            <person name="Furuno M."/>
            <person name="Futaki S."/>
            <person name="Gariboldi M."/>
            <person name="Georgii-Hemming P."/>
            <person name="Gingeras T.R."/>
            <person name="Gojobori T."/>
            <person name="Green R.E."/>
            <person name="Gustincich S."/>
            <person name="Harbers M."/>
            <person name="Hayashi Y."/>
            <person name="Hensch T.K."/>
            <person name="Hirokawa N."/>
            <person name="Hill D."/>
            <person name="Huminiecki L."/>
            <person name="Iacono M."/>
            <person name="Ikeo K."/>
            <person name="Iwama A."/>
            <person name="Ishikawa T."/>
            <person name="Jakt M."/>
            <person name="Kanapin A."/>
            <person name="Katoh M."/>
            <person name="Kawasawa Y."/>
            <person name="Kelso J."/>
            <person name="Kitamura H."/>
            <person name="Kitano H."/>
            <person name="Kollias G."/>
            <person name="Krishnan S.P."/>
            <person name="Kruger A."/>
            <person name="Kummerfeld S.K."/>
            <person name="Kurochkin I.V."/>
            <person name="Lareau L.F."/>
            <person name="Lazarevic D."/>
            <person name="Lipovich L."/>
            <person name="Liu J."/>
            <person name="Liuni S."/>
            <person name="McWilliam S."/>
            <person name="Madan Babu M."/>
            <person name="Madera M."/>
            <person name="Marchionni L."/>
            <person name="Matsuda H."/>
            <person name="Matsuzawa S."/>
            <person name="Miki H."/>
            <person name="Mignone F."/>
            <person name="Miyake S."/>
            <person name="Morris K."/>
            <person name="Mottagui-Tabar S."/>
            <person name="Mulder N."/>
            <person name="Nakano N."/>
            <person name="Nakauchi H."/>
            <person name="Ng P."/>
            <person name="Nilsson R."/>
            <person name="Nishiguchi S."/>
            <person name="Nishikawa S."/>
            <person name="Nori F."/>
            <person name="Ohara O."/>
            <person name="Okazaki Y."/>
            <person name="Orlando V."/>
            <person name="Pang K.C."/>
            <person name="Pavan W.J."/>
            <person name="Pavesi G."/>
            <person name="Pesole G."/>
            <person name="Petrovsky N."/>
            <person name="Piazza S."/>
            <person name="Reed J."/>
            <person name="Reid J.F."/>
            <person name="Ring B.Z."/>
            <person name="Ringwald M."/>
            <person name="Rost B."/>
            <person name="Ruan Y."/>
            <person name="Salzberg S.L."/>
            <person name="Sandelin A."/>
            <person name="Schneider C."/>
            <person name="Schoenbach C."/>
            <person name="Sekiguchi K."/>
            <person name="Semple C.A."/>
            <person name="Seno S."/>
            <person name="Sessa L."/>
            <person name="Sheng Y."/>
            <person name="Shibata Y."/>
            <person name="Shimada H."/>
            <person name="Shimada K."/>
            <person name="Silva D."/>
            <person name="Sinclair B."/>
            <person name="Sperling S."/>
            <person name="Stupka E."/>
            <person name="Sugiura K."/>
            <person name="Sultana R."/>
            <person name="Takenaka Y."/>
            <person name="Taki K."/>
            <person name="Tammoja K."/>
            <person name="Tan S.L."/>
            <person name="Tang S."/>
            <person name="Taylor M.S."/>
            <person name="Tegner J."/>
            <person name="Teichmann S.A."/>
            <person name="Ueda H.R."/>
            <person name="van Nimwegen E."/>
            <person name="Verardo R."/>
            <person name="Wei C.L."/>
            <person name="Yagi K."/>
            <person name="Yamanishi H."/>
            <person name="Zabarovsky E."/>
            <person name="Zhu S."/>
            <person name="Zimmer A."/>
            <person name="Hide W."/>
            <person name="Bult C."/>
            <person name="Grimmond S.M."/>
            <person name="Teasdale R.D."/>
            <person name="Liu E.T."/>
            <person name="Brusic V."/>
            <person name="Quackenbush J."/>
            <person name="Wahlestedt C."/>
            <person name="Mattick J.S."/>
            <person name="Hume D.A."/>
            <person name="Kai C."/>
            <person name="Sasaki D."/>
            <person name="Tomaru Y."/>
            <person name="Fukuda S."/>
            <person name="Kanamori-Katayama M."/>
            <person name="Suzuki M."/>
            <person name="Aoki J."/>
            <person name="Arakawa T."/>
            <person name="Iida J."/>
            <person name="Imamura K."/>
            <person name="Itoh M."/>
            <person name="Kato T."/>
            <person name="Kawaji H."/>
            <person name="Kawagashira N."/>
            <person name="Kawashima T."/>
            <person name="Kojima M."/>
            <person name="Kondo S."/>
            <person name="Konno H."/>
            <person name="Nakano K."/>
            <person name="Ninomiya N."/>
            <person name="Nishio T."/>
            <person name="Okada M."/>
            <person name="Plessy C."/>
            <person name="Shibata K."/>
            <person name="Shiraki T."/>
            <person name="Suzuki S."/>
            <person name="Tagami M."/>
            <person name="Waki K."/>
            <person name="Watahiki A."/>
            <person name="Okamura-Oho Y."/>
            <person name="Suzuki H."/>
            <person name="Kawai J."/>
            <person name="Hayashizaki Y."/>
        </authorList>
    </citation>
    <scope>NUCLEOTIDE SEQUENCE [LARGE SCALE MRNA] (ISOFORMS 1; 2; 3 AND 4)</scope>
    <source>
        <strain>C57BL/6J</strain>
        <tissue>Cerebellum</tissue>
        <tissue>Hippocampus</tissue>
        <tissue>Retina</tissue>
        <tissue>Thymus</tissue>
    </source>
</reference>
<reference key="2">
    <citation type="journal article" date="2004" name="Genome Res.">
        <title>The status, quality, and expansion of the NIH full-length cDNA project: the Mammalian Gene Collection (MGC).</title>
        <authorList>
            <consortium name="The MGC Project Team"/>
        </authorList>
    </citation>
    <scope>NUCLEOTIDE SEQUENCE [LARGE SCALE MRNA] (ISOFORM 2)</scope>
    <source>
        <strain>NMRI</strain>
        <tissue>Mammary tumor</tissue>
    </source>
</reference>
<dbReference type="EMBL" id="AK044429">
    <property type="protein sequence ID" value="BAC31914.1"/>
    <property type="molecule type" value="mRNA"/>
</dbReference>
<dbReference type="EMBL" id="AK044529">
    <property type="protein sequence ID" value="BAC31967.1"/>
    <property type="status" value="ALT_INIT"/>
    <property type="molecule type" value="mRNA"/>
</dbReference>
<dbReference type="EMBL" id="AK047538">
    <property type="protein sequence ID" value="BAC33082.1"/>
    <property type="status" value="ALT_FRAME"/>
    <property type="molecule type" value="mRNA"/>
</dbReference>
<dbReference type="EMBL" id="AK080307">
    <property type="protein sequence ID" value="BAC37873.1"/>
    <property type="molecule type" value="mRNA"/>
</dbReference>
<dbReference type="EMBL" id="AK081005">
    <property type="protein sequence ID" value="BAC38113.1"/>
    <property type="status" value="ALT_INIT"/>
    <property type="molecule type" value="mRNA"/>
</dbReference>
<dbReference type="EMBL" id="AK141613">
    <property type="protein sequence ID" value="BAE24766.1"/>
    <property type="molecule type" value="mRNA"/>
</dbReference>
<dbReference type="EMBL" id="AK169517">
    <property type="protein sequence ID" value="BAE41206.1"/>
    <property type="molecule type" value="mRNA"/>
</dbReference>
<dbReference type="EMBL" id="BC003332">
    <property type="protein sequence ID" value="AAH03332.1"/>
    <property type="status" value="ALT_FRAME"/>
    <property type="molecule type" value="mRNA"/>
</dbReference>
<dbReference type="CCDS" id="CCDS20358.1">
    <molecule id="Q8C8V1-1"/>
</dbReference>
<dbReference type="CCDS" id="CCDS51848.1">
    <molecule id="Q8C8V1-2"/>
</dbReference>
<dbReference type="RefSeq" id="NP_084536.2">
    <molecule id="Q8C8V1-2"/>
    <property type="nucleotide sequence ID" value="NM_030260.3"/>
</dbReference>
<dbReference type="RefSeq" id="NP_766590.1">
    <molecule id="Q8C8V1-1"/>
    <property type="nucleotide sequence ID" value="NM_173002.3"/>
</dbReference>
<dbReference type="SMR" id="Q8C8V1"/>
<dbReference type="FunCoup" id="Q8C8V1">
    <property type="interactions" value="2384"/>
</dbReference>
<dbReference type="STRING" id="10090.ENSMUSP00000074619"/>
<dbReference type="GlyGen" id="Q8C8V1">
    <property type="glycosylation" value="1 site"/>
</dbReference>
<dbReference type="iPTMnet" id="Q8C8V1"/>
<dbReference type="PhosphoSitePlus" id="Q8C8V1"/>
<dbReference type="PaxDb" id="10090-ENSMUSP00000074619"/>
<dbReference type="ProteomicsDB" id="275250">
    <molecule id="Q8C8V1-1"/>
</dbReference>
<dbReference type="ProteomicsDB" id="275251">
    <molecule id="Q8C8V1-2"/>
</dbReference>
<dbReference type="ProteomicsDB" id="275252">
    <molecule id="Q8C8V1-3"/>
</dbReference>
<dbReference type="ProteomicsDB" id="275253">
    <molecule id="Q8C8V1-4"/>
</dbReference>
<dbReference type="Pumba" id="Q8C8V1"/>
<dbReference type="Antibodypedia" id="33073">
    <property type="antibodies" value="107 antibodies from 21 providers"/>
</dbReference>
<dbReference type="DNASU" id="80292"/>
<dbReference type="Ensembl" id="ENSMUST00000045740.8">
    <molecule id="Q8C8V1-3"/>
    <property type="protein sequence ID" value="ENSMUSP00000036329.8"/>
    <property type="gene ID" value="ENSMUSG00000034430.17"/>
</dbReference>
<dbReference type="Ensembl" id="ENSMUST00000075117.10">
    <molecule id="Q8C8V1-1"/>
    <property type="protein sequence ID" value="ENSMUSP00000074619.4"/>
    <property type="gene ID" value="ENSMUSG00000034430.17"/>
</dbReference>
<dbReference type="Ensembl" id="ENSMUST00000113539.8">
    <molecule id="Q8C8V1-2"/>
    <property type="protein sequence ID" value="ENSMUSP00000109167.3"/>
    <property type="gene ID" value="ENSMUSG00000034430.17"/>
</dbReference>
<dbReference type="GeneID" id="80292"/>
<dbReference type="KEGG" id="mmu:80292"/>
<dbReference type="UCSC" id="uc009cxf.2">
    <molecule id="Q8C8V1-1"/>
    <property type="organism name" value="mouse"/>
</dbReference>
<dbReference type="UCSC" id="uc012eoy.1">
    <molecule id="Q8C8V1-2"/>
    <property type="organism name" value="mouse"/>
</dbReference>
<dbReference type="AGR" id="MGI:1933108"/>
<dbReference type="CTD" id="79364"/>
<dbReference type="MGI" id="MGI:1933108">
    <property type="gene designation" value="Zxdc"/>
</dbReference>
<dbReference type="VEuPathDB" id="HostDB:ENSMUSG00000034430"/>
<dbReference type="eggNOG" id="KOG1721">
    <property type="taxonomic scope" value="Eukaryota"/>
</dbReference>
<dbReference type="GeneTree" id="ENSGT00940000162216"/>
<dbReference type="HOGENOM" id="CLU_007312_0_0_1"/>
<dbReference type="InParanoid" id="Q8C8V1"/>
<dbReference type="OMA" id="TGVQCIQ"/>
<dbReference type="OrthoDB" id="6277246at2759"/>
<dbReference type="PhylomeDB" id="Q8C8V1"/>
<dbReference type="TreeFam" id="TF330996"/>
<dbReference type="BioGRID-ORCS" id="80292">
    <property type="hits" value="2 hits in 77 CRISPR screens"/>
</dbReference>
<dbReference type="PRO" id="PR:Q8C8V1"/>
<dbReference type="Proteomes" id="UP000000589">
    <property type="component" value="Chromosome 6"/>
</dbReference>
<dbReference type="RNAct" id="Q8C8V1">
    <property type="molecule type" value="protein"/>
</dbReference>
<dbReference type="Bgee" id="ENSMUSG00000034430">
    <property type="expression patterns" value="Expressed in ascending aorta and 247 other cell types or tissues"/>
</dbReference>
<dbReference type="ExpressionAtlas" id="Q8C8V1">
    <property type="expression patterns" value="baseline and differential"/>
</dbReference>
<dbReference type="GO" id="GO:0005634">
    <property type="term" value="C:nucleus"/>
    <property type="evidence" value="ECO:0007669"/>
    <property type="project" value="UniProtKB-SubCell"/>
</dbReference>
<dbReference type="GO" id="GO:0070742">
    <property type="term" value="F:C2H2 zinc finger domain binding"/>
    <property type="evidence" value="ECO:0000250"/>
    <property type="project" value="UniProtKB"/>
</dbReference>
<dbReference type="GO" id="GO:0030275">
    <property type="term" value="F:LRR domain binding"/>
    <property type="evidence" value="ECO:0000250"/>
    <property type="project" value="UniProtKB"/>
</dbReference>
<dbReference type="GO" id="GO:0003713">
    <property type="term" value="F:transcription coactivator activity"/>
    <property type="evidence" value="ECO:0000250"/>
    <property type="project" value="UniProtKB"/>
</dbReference>
<dbReference type="GO" id="GO:0008270">
    <property type="term" value="F:zinc ion binding"/>
    <property type="evidence" value="ECO:0007669"/>
    <property type="project" value="UniProtKB-KW"/>
</dbReference>
<dbReference type="GO" id="GO:0045893">
    <property type="term" value="P:positive regulation of DNA-templated transcription"/>
    <property type="evidence" value="ECO:0000250"/>
    <property type="project" value="UniProtKB"/>
</dbReference>
<dbReference type="FunFam" id="3.30.160.60:FF:000543">
    <property type="entry name" value="Zinc finger protein 384 like"/>
    <property type="match status" value="1"/>
</dbReference>
<dbReference type="FunFam" id="3.30.160.60:FF:000872">
    <property type="entry name" value="zinc finger X-linked protein ZXDB"/>
    <property type="match status" value="1"/>
</dbReference>
<dbReference type="FunFam" id="3.30.160.60:FF:000257">
    <property type="entry name" value="ZXD family zinc finger C"/>
    <property type="match status" value="3"/>
</dbReference>
<dbReference type="FunFam" id="3.30.160.60:FF:000499">
    <property type="entry name" value="ZXD family zinc finger C"/>
    <property type="match status" value="1"/>
</dbReference>
<dbReference type="FunFam" id="3.30.160.60:FF:001192">
    <property type="entry name" value="ZXD family zinc finger C"/>
    <property type="match status" value="1"/>
</dbReference>
<dbReference type="Gene3D" id="3.30.160.60">
    <property type="entry name" value="Classic Zinc Finger"/>
    <property type="match status" value="9"/>
</dbReference>
<dbReference type="InterPro" id="IPR051061">
    <property type="entry name" value="Zinc_finger_trans_reg"/>
</dbReference>
<dbReference type="InterPro" id="IPR036236">
    <property type="entry name" value="Znf_C2H2_sf"/>
</dbReference>
<dbReference type="InterPro" id="IPR013087">
    <property type="entry name" value="Znf_C2H2_type"/>
</dbReference>
<dbReference type="PANTHER" id="PTHR46179">
    <property type="entry name" value="ZINC FINGER PROTEIN"/>
    <property type="match status" value="1"/>
</dbReference>
<dbReference type="PANTHER" id="PTHR46179:SF5">
    <property type="entry name" value="ZINC FINGER PROTEIN ZXDC"/>
    <property type="match status" value="1"/>
</dbReference>
<dbReference type="Pfam" id="PF00096">
    <property type="entry name" value="zf-C2H2"/>
    <property type="match status" value="6"/>
</dbReference>
<dbReference type="SMART" id="SM00355">
    <property type="entry name" value="ZnF_C2H2"/>
    <property type="match status" value="10"/>
</dbReference>
<dbReference type="SUPFAM" id="SSF57667">
    <property type="entry name" value="beta-beta-alpha zinc fingers"/>
    <property type="match status" value="5"/>
</dbReference>
<dbReference type="PROSITE" id="PS00028">
    <property type="entry name" value="ZINC_FINGER_C2H2_1"/>
    <property type="match status" value="10"/>
</dbReference>
<dbReference type="PROSITE" id="PS50157">
    <property type="entry name" value="ZINC_FINGER_C2H2_2"/>
    <property type="match status" value="10"/>
</dbReference>
<proteinExistence type="evidence at transcript level"/>
<feature type="chain" id="PRO_0000292804" description="Zinc finger protein ZXDC">
    <location>
        <begin position="1"/>
        <end position="858"/>
    </location>
</feature>
<feature type="zinc finger region" description="C2H2-type 1" evidence="2">
    <location>
        <begin position="176"/>
        <end position="200"/>
    </location>
</feature>
<feature type="zinc finger region" description="C2H2-type 2" evidence="2">
    <location>
        <begin position="209"/>
        <end position="233"/>
    </location>
</feature>
<feature type="zinc finger region" description="C2H2-type 3" evidence="2">
    <location>
        <begin position="239"/>
        <end position="263"/>
    </location>
</feature>
<feature type="zinc finger region" description="C2H2-type 4" evidence="2">
    <location>
        <begin position="269"/>
        <end position="291"/>
    </location>
</feature>
<feature type="zinc finger region" description="C2H2-type 5" evidence="2">
    <location>
        <begin position="298"/>
        <end position="322"/>
    </location>
</feature>
<feature type="zinc finger region" description="C2H2-type 6" evidence="2">
    <location>
        <begin position="329"/>
        <end position="353"/>
    </location>
</feature>
<feature type="zinc finger region" description="C2H2-type 7" evidence="2">
    <location>
        <begin position="359"/>
        <end position="383"/>
    </location>
</feature>
<feature type="zinc finger region" description="C2H2-type 8" evidence="2">
    <location>
        <begin position="389"/>
        <end position="413"/>
    </location>
</feature>
<feature type="zinc finger region" description="C2H2-type 9" evidence="2">
    <location>
        <begin position="419"/>
        <end position="443"/>
    </location>
</feature>
<feature type="zinc finger region" description="C2H2-type 10" evidence="2">
    <location>
        <begin position="452"/>
        <end position="477"/>
    </location>
</feature>
<feature type="region of interest" description="Disordered" evidence="3">
    <location>
        <begin position="1"/>
        <end position="73"/>
    </location>
</feature>
<feature type="region of interest" description="Disordered" evidence="3">
    <location>
        <begin position="85"/>
        <end position="108"/>
    </location>
</feature>
<feature type="region of interest" description="Disordered" evidence="3">
    <location>
        <begin position="142"/>
        <end position="175"/>
    </location>
</feature>
<feature type="region of interest" description="Disordered" evidence="3">
    <location>
        <begin position="624"/>
        <end position="652"/>
    </location>
</feature>
<feature type="region of interest" description="Disordered" evidence="3">
    <location>
        <begin position="671"/>
        <end position="714"/>
    </location>
</feature>
<feature type="region of interest" description="Disordered" evidence="3">
    <location>
        <begin position="727"/>
        <end position="751"/>
    </location>
</feature>
<feature type="compositionally biased region" description="Pro residues" evidence="3">
    <location>
        <begin position="59"/>
        <end position="68"/>
    </location>
</feature>
<feature type="compositionally biased region" description="Low complexity" evidence="3">
    <location>
        <begin position="142"/>
        <end position="152"/>
    </location>
</feature>
<feature type="compositionally biased region" description="Polar residues" evidence="3">
    <location>
        <begin position="624"/>
        <end position="634"/>
    </location>
</feature>
<feature type="compositionally biased region" description="Low complexity" evidence="3">
    <location>
        <begin position="635"/>
        <end position="651"/>
    </location>
</feature>
<feature type="compositionally biased region" description="Polar residues" evidence="3">
    <location>
        <begin position="681"/>
        <end position="692"/>
    </location>
</feature>
<feature type="cross-link" description="Glycyl lysine isopeptide (Lys-Gly) (interchain with G-Cter in SUMO)" evidence="1">
    <location>
        <position position="661"/>
    </location>
</feature>
<feature type="splice variant" id="VSP_026439" description="In isoform 4." evidence="5">
    <original>ERPFICDS</original>
    <variation>MSCSVHLM</variation>
    <location>
        <begin position="356"/>
        <end position="363"/>
    </location>
</feature>
<feature type="splice variant" id="VSP_026440" description="In isoform 4." evidence="5">
    <location>
        <begin position="364"/>
        <end position="858"/>
    </location>
</feature>
<feature type="splice variant" id="VSP_026441" description="In isoform 3." evidence="5">
    <original>SELTNIDL</original>
    <variation>RKWGLSKN</variation>
    <location>
        <begin position="505"/>
        <end position="512"/>
    </location>
</feature>
<feature type="splice variant" id="VSP_026442" description="In isoform 3." evidence="5">
    <location>
        <begin position="513"/>
        <end position="858"/>
    </location>
</feature>
<feature type="splice variant" id="VSP_026443" description="In isoform 2." evidence="4 5">
    <original>E</original>
    <variation>V</variation>
    <location>
        <position position="712"/>
    </location>
</feature>
<feature type="splice variant" id="VSP_026444" description="In isoform 2." evidence="4 5">
    <location>
        <begin position="713"/>
        <end position="858"/>
    </location>
</feature>
<feature type="sequence conflict" description="In Ref. 1; BAE24766." evidence="6" ref="1">
    <original>L</original>
    <variation>Q</variation>
    <location>
        <position position="154"/>
    </location>
</feature>
<feature type="sequence conflict" description="In Ref. 1; BAC38113." evidence="6" ref="1">
    <original>P</original>
    <variation>R</variation>
    <location>
        <position position="576"/>
    </location>
</feature>
<feature type="sequence conflict" description="In Ref. 1; BAC37873." evidence="6" ref="1">
    <original>G</original>
    <variation>V</variation>
    <location>
        <position position="608"/>
    </location>
</feature>
<accession>Q8C8V1</accession>
<accession>Q3TEP2</accession>
<accession>Q3URC2</accession>
<accession>Q8C4U7</accession>
<accession>Q8C4Z9</accession>
<accession>Q8C8C2</accession>
<accession>Q8C8T1</accession>
<accession>Q99J65</accession>
<organism>
    <name type="scientific">Mus musculus</name>
    <name type="common">Mouse</name>
    <dbReference type="NCBI Taxonomy" id="10090"/>
    <lineage>
        <taxon>Eukaryota</taxon>
        <taxon>Metazoa</taxon>
        <taxon>Chordata</taxon>
        <taxon>Craniata</taxon>
        <taxon>Vertebrata</taxon>
        <taxon>Euteleostomi</taxon>
        <taxon>Mammalia</taxon>
        <taxon>Eutheria</taxon>
        <taxon>Euarchontoglires</taxon>
        <taxon>Glires</taxon>
        <taxon>Rodentia</taxon>
        <taxon>Myomorpha</taxon>
        <taxon>Muroidea</taxon>
        <taxon>Muridae</taxon>
        <taxon>Murinae</taxon>
        <taxon>Mus</taxon>
        <taxon>Mus</taxon>
    </lineage>
</organism>
<comment type="function">
    <text evidence="1">Cooperates with CIITA to promote transcription of MHC class I and MHC class II genes.</text>
</comment>
<comment type="subunit">
    <text evidence="1">Self-associates. Interacts with ZXDB and CIITA (By similarity).</text>
</comment>
<comment type="subcellular location">
    <subcellularLocation>
        <location evidence="6">Nucleus</location>
    </subcellularLocation>
</comment>
<comment type="alternative products">
    <event type="alternative splicing"/>
    <isoform>
        <id>Q8C8V1-1</id>
        <name>1</name>
        <sequence type="displayed"/>
    </isoform>
    <isoform>
        <id>Q8C8V1-2</id>
        <name>2</name>
        <sequence type="described" ref="VSP_026443 VSP_026444"/>
    </isoform>
    <isoform>
        <id>Q8C8V1-3</id>
        <name>3</name>
        <sequence type="described" ref="VSP_026441 VSP_026442"/>
    </isoform>
    <isoform>
        <id>Q8C8V1-4</id>
        <name>4</name>
        <sequence type="described" ref="VSP_026439 VSP_026440"/>
    </isoform>
</comment>
<comment type="PTM">
    <text evidence="1">Sumoylated at Lys-661 with SUMO1, SUMO2 and SUMO3; sumoylation enhances the activity of the transcriptional activation domain.</text>
</comment>
<comment type="similarity">
    <text evidence="6">Belongs to the ZXD family.</text>
</comment>
<comment type="sequence caution" evidence="6">
    <conflict type="frameshift">
        <sequence resource="EMBL-CDS" id="AAH03332"/>
    </conflict>
</comment>
<comment type="sequence caution" evidence="6">
    <conflict type="erroneous initiation">
        <sequence resource="EMBL-CDS" id="BAC31967"/>
    </conflict>
    <text>Extended N-terminus.</text>
</comment>
<comment type="sequence caution" evidence="6">
    <conflict type="frameshift">
        <sequence resource="EMBL-CDS" id="BAC33082"/>
    </conflict>
</comment>
<comment type="sequence caution" evidence="6">
    <conflict type="erroneous initiation">
        <sequence resource="EMBL-CDS" id="BAC38113"/>
    </conflict>
    <text>Extended N-terminus.</text>
</comment>
<keyword id="KW-0010">Activator</keyword>
<keyword id="KW-0025">Alternative splicing</keyword>
<keyword id="KW-1017">Isopeptide bond</keyword>
<keyword id="KW-0479">Metal-binding</keyword>
<keyword id="KW-0539">Nucleus</keyword>
<keyword id="KW-1185">Reference proteome</keyword>
<keyword id="KW-0677">Repeat</keyword>
<keyword id="KW-0804">Transcription</keyword>
<keyword id="KW-0805">Transcription regulation</keyword>
<keyword id="KW-0832">Ubl conjugation</keyword>
<keyword id="KW-0862">Zinc</keyword>
<keyword id="KW-0863">Zinc-finger</keyword>
<name>ZXDC_MOUSE</name>
<gene>
    <name type="primary">Zxdc</name>
</gene>
<sequence>MDLPAVLAAPATRGDQHGGGPSRLRRGAGPSLGAGPGRRRLLLLRGPEDGGPGPRPEEAPGPSPPPPEDGGDSFVVLLEVPRAADTHGQEEAEPDSGASPTEQVPAAAPGAALAGTVTIHNQDLLVRFDRGVFTLAAAPAPAAPSLHPATTPGLEPSSAAASRRGPVAASAGSPAYRCPEPQCALSFAKKHQLKVHLLTHGSLQGRRPFKCPLDGCGWAFTTSYKLKRHLQSHDKLRPFSCPVGGCGKKFTTVYNLKAHMKGHEQESLFKCEVCAERFPTHAKLNSHQRSHFEPERPYKCDFPGCEKTFITVSALFSHNRAHFREQELFSCSFPGCNKQYDKACRLKIHLRSHTGERPFICDSDSCGWTFTSMSKLLRHKRKHDDDRRFTCPVEGCGKSFTRAEHLKGHSITHLGTKPFECPVEGCCARFSARSSLYIHSKKHLQDVGTPKSRCPVSSCNRLFTSKHSMKAHVVRQHSRRQDLVPQLEAPSSLTPSSELSSPGQSELTNIDLAALFSDTPANSSSSTAGSDEALNSGILTIDVTSVSSSLGGNLPTNNNSLGPMDPLVLVAHGDMPPSLDSPLVLGTSATVLQPGSFSADDSQAMSTGAVGCLVALPVRNLNQDSPALTPSNNLTAPGTTPTSSDTTQETGSVPDLLVPIKVEQDLSPVPDVVQGQKESHGPSQSVLSSSTERPGAQKDSELSAGTGSLYLESGGSARTDYRAIQLVKKKKQKGTGSDEGASDSAHRKVKGGTINPPHVHSGQHSCFCGTLMVPSGGLTVPAPAAGLQCVQIPVLQDDPSGEGGLPLGLSPQRSAFHPYFTVDLPVYVLQEVLPAPGGFAGLETAQVPGSTINLRDLE</sequence>